<organism>
    <name type="scientific">Escherichia coli O7:K1 (strain IAI39 / ExPEC)</name>
    <dbReference type="NCBI Taxonomy" id="585057"/>
    <lineage>
        <taxon>Bacteria</taxon>
        <taxon>Pseudomonadati</taxon>
        <taxon>Pseudomonadota</taxon>
        <taxon>Gammaproteobacteria</taxon>
        <taxon>Enterobacterales</taxon>
        <taxon>Enterobacteriaceae</taxon>
        <taxon>Escherichia</taxon>
    </lineage>
</organism>
<feature type="chain" id="PRO_1000191907" description="Aspartate carbamoyltransferase catalytic subunit">
    <location>
        <begin position="1"/>
        <end position="311"/>
    </location>
</feature>
<feature type="binding site" evidence="1">
    <location>
        <position position="55"/>
    </location>
    <ligand>
        <name>carbamoyl phosphate</name>
        <dbReference type="ChEBI" id="CHEBI:58228"/>
    </ligand>
</feature>
<feature type="binding site" evidence="1">
    <location>
        <position position="56"/>
    </location>
    <ligand>
        <name>carbamoyl phosphate</name>
        <dbReference type="ChEBI" id="CHEBI:58228"/>
    </ligand>
</feature>
<feature type="binding site" evidence="1">
    <location>
        <position position="85"/>
    </location>
    <ligand>
        <name>L-aspartate</name>
        <dbReference type="ChEBI" id="CHEBI:29991"/>
    </ligand>
</feature>
<feature type="binding site" evidence="1">
    <location>
        <position position="106"/>
    </location>
    <ligand>
        <name>carbamoyl phosphate</name>
        <dbReference type="ChEBI" id="CHEBI:58228"/>
    </ligand>
</feature>
<feature type="binding site" evidence="1">
    <location>
        <position position="135"/>
    </location>
    <ligand>
        <name>carbamoyl phosphate</name>
        <dbReference type="ChEBI" id="CHEBI:58228"/>
    </ligand>
</feature>
<feature type="binding site" evidence="1">
    <location>
        <position position="138"/>
    </location>
    <ligand>
        <name>carbamoyl phosphate</name>
        <dbReference type="ChEBI" id="CHEBI:58228"/>
    </ligand>
</feature>
<feature type="binding site" evidence="1">
    <location>
        <position position="168"/>
    </location>
    <ligand>
        <name>L-aspartate</name>
        <dbReference type="ChEBI" id="CHEBI:29991"/>
    </ligand>
</feature>
<feature type="binding site" evidence="1">
    <location>
        <position position="230"/>
    </location>
    <ligand>
        <name>L-aspartate</name>
        <dbReference type="ChEBI" id="CHEBI:29991"/>
    </ligand>
</feature>
<feature type="binding site" evidence="1">
    <location>
        <position position="268"/>
    </location>
    <ligand>
        <name>carbamoyl phosphate</name>
        <dbReference type="ChEBI" id="CHEBI:58228"/>
    </ligand>
</feature>
<feature type="binding site" evidence="1">
    <location>
        <position position="269"/>
    </location>
    <ligand>
        <name>carbamoyl phosphate</name>
        <dbReference type="ChEBI" id="CHEBI:58228"/>
    </ligand>
</feature>
<protein>
    <recommendedName>
        <fullName evidence="1">Aspartate carbamoyltransferase catalytic subunit</fullName>
        <ecNumber evidence="1">2.1.3.2</ecNumber>
    </recommendedName>
    <alternativeName>
        <fullName evidence="1">Aspartate transcarbamylase</fullName>
        <shortName evidence="1">ATCase</shortName>
    </alternativeName>
</protein>
<sequence>MANPLYQKHIISINDLSRDDLNLVLATAAKLKANPQPELLKHKVIASCFFEASTRTRLSFETSMHRLGASVVGFSDSANTSLGKKGETLADTISVISTYVDAIVMRHPQEGAARLATEFSGNVPVLNAGDGSNQHPTQTLLDLFTIQETQGRLDNLHVAMVGDLKYGRTVHSLTQALAKFDGNRFYFIAPDALAMPQYILDMLDEKGIAWSLHSSIEEVMAEVDILYMTRVQKERLDPSEYANVKAQFVLRASDLHNAKANMKVLHPLPRVDEIATDVDKTPHAWYFQQAGNGIFARQALLALVLNRDLVL</sequence>
<dbReference type="EC" id="2.1.3.2" evidence="1"/>
<dbReference type="EMBL" id="CU928164">
    <property type="protein sequence ID" value="CAR20817.1"/>
    <property type="molecule type" value="Genomic_DNA"/>
</dbReference>
<dbReference type="RefSeq" id="WP_000013046.1">
    <property type="nucleotide sequence ID" value="NC_011750.1"/>
</dbReference>
<dbReference type="RefSeq" id="YP_002410578.1">
    <property type="nucleotide sequence ID" value="NC_011750.1"/>
</dbReference>
<dbReference type="SMR" id="B7NUG1"/>
<dbReference type="STRING" id="585057.ECIAI39_4720"/>
<dbReference type="GeneID" id="93777579"/>
<dbReference type="KEGG" id="ect:ECIAI39_4720"/>
<dbReference type="PATRIC" id="fig|585057.6.peg.4871"/>
<dbReference type="HOGENOM" id="CLU_043846_1_2_6"/>
<dbReference type="UniPathway" id="UPA00070">
    <property type="reaction ID" value="UER00116"/>
</dbReference>
<dbReference type="Proteomes" id="UP000000749">
    <property type="component" value="Chromosome"/>
</dbReference>
<dbReference type="GO" id="GO:0005829">
    <property type="term" value="C:cytosol"/>
    <property type="evidence" value="ECO:0007669"/>
    <property type="project" value="TreeGrafter"/>
</dbReference>
<dbReference type="GO" id="GO:0016597">
    <property type="term" value="F:amino acid binding"/>
    <property type="evidence" value="ECO:0007669"/>
    <property type="project" value="InterPro"/>
</dbReference>
<dbReference type="GO" id="GO:0004070">
    <property type="term" value="F:aspartate carbamoyltransferase activity"/>
    <property type="evidence" value="ECO:0007669"/>
    <property type="project" value="UniProtKB-UniRule"/>
</dbReference>
<dbReference type="GO" id="GO:0006207">
    <property type="term" value="P:'de novo' pyrimidine nucleobase biosynthetic process"/>
    <property type="evidence" value="ECO:0007669"/>
    <property type="project" value="InterPro"/>
</dbReference>
<dbReference type="GO" id="GO:0044205">
    <property type="term" value="P:'de novo' UMP biosynthetic process"/>
    <property type="evidence" value="ECO:0007669"/>
    <property type="project" value="UniProtKB-UniRule"/>
</dbReference>
<dbReference type="GO" id="GO:0006520">
    <property type="term" value="P:amino acid metabolic process"/>
    <property type="evidence" value="ECO:0007669"/>
    <property type="project" value="InterPro"/>
</dbReference>
<dbReference type="FunFam" id="3.40.50.1370:FF:000001">
    <property type="entry name" value="Aspartate carbamoyltransferase"/>
    <property type="match status" value="1"/>
</dbReference>
<dbReference type="FunFam" id="3.40.50.1370:FF:000002">
    <property type="entry name" value="Aspartate carbamoyltransferase 2"/>
    <property type="match status" value="1"/>
</dbReference>
<dbReference type="Gene3D" id="3.40.50.1370">
    <property type="entry name" value="Aspartate/ornithine carbamoyltransferase"/>
    <property type="match status" value="2"/>
</dbReference>
<dbReference type="HAMAP" id="MF_00001">
    <property type="entry name" value="Asp_carb_tr"/>
    <property type="match status" value="1"/>
</dbReference>
<dbReference type="InterPro" id="IPR006132">
    <property type="entry name" value="Asp/Orn_carbamoyltranf_P-bd"/>
</dbReference>
<dbReference type="InterPro" id="IPR006130">
    <property type="entry name" value="Asp/Orn_carbamoylTrfase"/>
</dbReference>
<dbReference type="InterPro" id="IPR036901">
    <property type="entry name" value="Asp/Orn_carbamoylTrfase_sf"/>
</dbReference>
<dbReference type="InterPro" id="IPR002082">
    <property type="entry name" value="Asp_carbamoyltransf"/>
</dbReference>
<dbReference type="InterPro" id="IPR006131">
    <property type="entry name" value="Asp_carbamoyltransf_Asp/Orn-bd"/>
</dbReference>
<dbReference type="NCBIfam" id="TIGR00670">
    <property type="entry name" value="asp_carb_tr"/>
    <property type="match status" value="1"/>
</dbReference>
<dbReference type="NCBIfam" id="NF002032">
    <property type="entry name" value="PRK00856.1"/>
    <property type="match status" value="1"/>
</dbReference>
<dbReference type="PANTHER" id="PTHR45753:SF6">
    <property type="entry name" value="ASPARTATE CARBAMOYLTRANSFERASE"/>
    <property type="match status" value="1"/>
</dbReference>
<dbReference type="PANTHER" id="PTHR45753">
    <property type="entry name" value="ORNITHINE CARBAMOYLTRANSFERASE, MITOCHONDRIAL"/>
    <property type="match status" value="1"/>
</dbReference>
<dbReference type="Pfam" id="PF00185">
    <property type="entry name" value="OTCace"/>
    <property type="match status" value="1"/>
</dbReference>
<dbReference type="Pfam" id="PF02729">
    <property type="entry name" value="OTCace_N"/>
    <property type="match status" value="1"/>
</dbReference>
<dbReference type="PRINTS" id="PR00100">
    <property type="entry name" value="AOTCASE"/>
</dbReference>
<dbReference type="PRINTS" id="PR00101">
    <property type="entry name" value="ATCASE"/>
</dbReference>
<dbReference type="SUPFAM" id="SSF53671">
    <property type="entry name" value="Aspartate/ornithine carbamoyltransferase"/>
    <property type="match status" value="1"/>
</dbReference>
<dbReference type="PROSITE" id="PS00097">
    <property type="entry name" value="CARBAMOYLTRANSFERASE"/>
    <property type="match status" value="1"/>
</dbReference>
<gene>
    <name evidence="1" type="primary">pyrB</name>
    <name type="ordered locus">ECIAI39_4720</name>
</gene>
<name>PYRB_ECO7I</name>
<proteinExistence type="inferred from homology"/>
<keyword id="KW-0665">Pyrimidine biosynthesis</keyword>
<keyword id="KW-0808">Transferase</keyword>
<comment type="function">
    <text evidence="1">Catalyzes the condensation of carbamoyl phosphate and aspartate to form carbamoyl aspartate and inorganic phosphate, the committed step in the de novo pyrimidine nucleotide biosynthesis pathway.</text>
</comment>
<comment type="catalytic activity">
    <reaction evidence="1">
        <text>carbamoyl phosphate + L-aspartate = N-carbamoyl-L-aspartate + phosphate + H(+)</text>
        <dbReference type="Rhea" id="RHEA:20013"/>
        <dbReference type="ChEBI" id="CHEBI:15378"/>
        <dbReference type="ChEBI" id="CHEBI:29991"/>
        <dbReference type="ChEBI" id="CHEBI:32814"/>
        <dbReference type="ChEBI" id="CHEBI:43474"/>
        <dbReference type="ChEBI" id="CHEBI:58228"/>
        <dbReference type="EC" id="2.1.3.2"/>
    </reaction>
</comment>
<comment type="pathway">
    <text evidence="1">Pyrimidine metabolism; UMP biosynthesis via de novo pathway; (S)-dihydroorotate from bicarbonate: step 2/3.</text>
</comment>
<comment type="subunit">
    <text evidence="1">Heterododecamer (2C3:3R2) of six catalytic PyrB chains organized as two trimers (C3), and six regulatory PyrI chains organized as three dimers (R2).</text>
</comment>
<comment type="similarity">
    <text evidence="1">Belongs to the aspartate/ornithine carbamoyltransferase superfamily. ATCase family.</text>
</comment>
<accession>B7NUG1</accession>
<reference key="1">
    <citation type="journal article" date="2009" name="PLoS Genet.">
        <title>Organised genome dynamics in the Escherichia coli species results in highly diverse adaptive paths.</title>
        <authorList>
            <person name="Touchon M."/>
            <person name="Hoede C."/>
            <person name="Tenaillon O."/>
            <person name="Barbe V."/>
            <person name="Baeriswyl S."/>
            <person name="Bidet P."/>
            <person name="Bingen E."/>
            <person name="Bonacorsi S."/>
            <person name="Bouchier C."/>
            <person name="Bouvet O."/>
            <person name="Calteau A."/>
            <person name="Chiapello H."/>
            <person name="Clermont O."/>
            <person name="Cruveiller S."/>
            <person name="Danchin A."/>
            <person name="Diard M."/>
            <person name="Dossat C."/>
            <person name="Karoui M.E."/>
            <person name="Frapy E."/>
            <person name="Garry L."/>
            <person name="Ghigo J.M."/>
            <person name="Gilles A.M."/>
            <person name="Johnson J."/>
            <person name="Le Bouguenec C."/>
            <person name="Lescat M."/>
            <person name="Mangenot S."/>
            <person name="Martinez-Jehanne V."/>
            <person name="Matic I."/>
            <person name="Nassif X."/>
            <person name="Oztas S."/>
            <person name="Petit M.A."/>
            <person name="Pichon C."/>
            <person name="Rouy Z."/>
            <person name="Ruf C.S."/>
            <person name="Schneider D."/>
            <person name="Tourret J."/>
            <person name="Vacherie B."/>
            <person name="Vallenet D."/>
            <person name="Medigue C."/>
            <person name="Rocha E.P.C."/>
            <person name="Denamur E."/>
        </authorList>
    </citation>
    <scope>NUCLEOTIDE SEQUENCE [LARGE SCALE GENOMIC DNA]</scope>
    <source>
        <strain>IAI39 / ExPEC</strain>
    </source>
</reference>
<evidence type="ECO:0000255" key="1">
    <source>
        <dbReference type="HAMAP-Rule" id="MF_00001"/>
    </source>
</evidence>